<dbReference type="EC" id="5.4.2.12" evidence="1 2"/>
<dbReference type="EMBL" id="U12776">
    <property type="protein sequence ID" value="AAA77677.1"/>
    <property type="molecule type" value="Genomic_DNA"/>
</dbReference>
<dbReference type="EMBL" id="AE016853">
    <property type="protein sequence ID" value="AAO58753.1"/>
    <property type="molecule type" value="Genomic_DNA"/>
</dbReference>
<dbReference type="PIR" id="A56142">
    <property type="entry name" value="A56142"/>
</dbReference>
<dbReference type="RefSeq" id="NP_795058.1">
    <property type="nucleotide sequence ID" value="NC_004578.1"/>
</dbReference>
<dbReference type="RefSeq" id="WP_011105426.1">
    <property type="nucleotide sequence ID" value="NC_004578.1"/>
</dbReference>
<dbReference type="SMR" id="P52832"/>
<dbReference type="STRING" id="223283.PSPTO_5327"/>
<dbReference type="GeneID" id="1187012"/>
<dbReference type="KEGG" id="pst:PSPTO_5327"/>
<dbReference type="PATRIC" id="fig|223283.9.peg.5454"/>
<dbReference type="eggNOG" id="COG0696">
    <property type="taxonomic scope" value="Bacteria"/>
</dbReference>
<dbReference type="HOGENOM" id="CLU_026099_2_0_6"/>
<dbReference type="OrthoDB" id="9800863at2"/>
<dbReference type="PhylomeDB" id="P52832"/>
<dbReference type="UniPathway" id="UPA00109">
    <property type="reaction ID" value="UER00186"/>
</dbReference>
<dbReference type="Proteomes" id="UP000002515">
    <property type="component" value="Chromosome"/>
</dbReference>
<dbReference type="GO" id="GO:0005829">
    <property type="term" value="C:cytosol"/>
    <property type="evidence" value="ECO:0007669"/>
    <property type="project" value="TreeGrafter"/>
</dbReference>
<dbReference type="GO" id="GO:0030145">
    <property type="term" value="F:manganese ion binding"/>
    <property type="evidence" value="ECO:0007669"/>
    <property type="project" value="UniProtKB-UniRule"/>
</dbReference>
<dbReference type="GO" id="GO:0004619">
    <property type="term" value="F:phosphoglycerate mutase activity"/>
    <property type="evidence" value="ECO:0007669"/>
    <property type="project" value="UniProtKB-EC"/>
</dbReference>
<dbReference type="GO" id="GO:0006007">
    <property type="term" value="P:glucose catabolic process"/>
    <property type="evidence" value="ECO:0007669"/>
    <property type="project" value="InterPro"/>
</dbReference>
<dbReference type="GO" id="GO:0006096">
    <property type="term" value="P:glycolytic process"/>
    <property type="evidence" value="ECO:0007669"/>
    <property type="project" value="UniProtKB-UniRule"/>
</dbReference>
<dbReference type="CDD" id="cd16010">
    <property type="entry name" value="iPGM"/>
    <property type="match status" value="1"/>
</dbReference>
<dbReference type="FunFam" id="3.40.1450.10:FF:000001">
    <property type="entry name" value="2,3-bisphosphoglycerate-independent phosphoglycerate mutase"/>
    <property type="match status" value="1"/>
</dbReference>
<dbReference type="FunFam" id="3.40.720.10:FF:000001">
    <property type="entry name" value="2,3-bisphosphoglycerate-independent phosphoglycerate mutase"/>
    <property type="match status" value="1"/>
</dbReference>
<dbReference type="Gene3D" id="3.40.720.10">
    <property type="entry name" value="Alkaline Phosphatase, subunit A"/>
    <property type="match status" value="1"/>
</dbReference>
<dbReference type="Gene3D" id="3.40.1450.10">
    <property type="entry name" value="BPG-independent phosphoglycerate mutase, domain B"/>
    <property type="match status" value="1"/>
</dbReference>
<dbReference type="HAMAP" id="MF_01038">
    <property type="entry name" value="GpmI"/>
    <property type="match status" value="1"/>
</dbReference>
<dbReference type="InterPro" id="IPR017850">
    <property type="entry name" value="Alkaline_phosphatase_core_sf"/>
</dbReference>
<dbReference type="InterPro" id="IPR011258">
    <property type="entry name" value="BPG-indep_PGM_N"/>
</dbReference>
<dbReference type="InterPro" id="IPR006124">
    <property type="entry name" value="Metalloenzyme"/>
</dbReference>
<dbReference type="InterPro" id="IPR036646">
    <property type="entry name" value="PGAM_B_sf"/>
</dbReference>
<dbReference type="InterPro" id="IPR005995">
    <property type="entry name" value="Pgm_bpd_ind"/>
</dbReference>
<dbReference type="NCBIfam" id="TIGR01307">
    <property type="entry name" value="pgm_bpd_ind"/>
    <property type="match status" value="1"/>
</dbReference>
<dbReference type="PANTHER" id="PTHR31637">
    <property type="entry name" value="2,3-BISPHOSPHOGLYCERATE-INDEPENDENT PHOSPHOGLYCERATE MUTASE"/>
    <property type="match status" value="1"/>
</dbReference>
<dbReference type="PANTHER" id="PTHR31637:SF0">
    <property type="entry name" value="2,3-BISPHOSPHOGLYCERATE-INDEPENDENT PHOSPHOGLYCERATE MUTASE"/>
    <property type="match status" value="1"/>
</dbReference>
<dbReference type="Pfam" id="PF06415">
    <property type="entry name" value="iPGM_N"/>
    <property type="match status" value="1"/>
</dbReference>
<dbReference type="Pfam" id="PF01676">
    <property type="entry name" value="Metalloenzyme"/>
    <property type="match status" value="1"/>
</dbReference>
<dbReference type="PIRSF" id="PIRSF001492">
    <property type="entry name" value="IPGAM"/>
    <property type="match status" value="1"/>
</dbReference>
<dbReference type="SUPFAM" id="SSF64158">
    <property type="entry name" value="2,3-Bisphosphoglycerate-independent phosphoglycerate mutase, substrate-binding domain"/>
    <property type="match status" value="1"/>
</dbReference>
<dbReference type="SUPFAM" id="SSF53649">
    <property type="entry name" value="Alkaline phosphatase-like"/>
    <property type="match status" value="1"/>
</dbReference>
<protein>
    <recommendedName>
        <fullName evidence="1">2,3-bisphosphoglycerate-independent phosphoglycerate mutase</fullName>
        <shortName evidence="1">BPG-independent PGAM</shortName>
        <shortName evidence="1">Phosphoglyceromutase</shortName>
        <shortName evidence="1">iPGM</shortName>
        <ecNumber evidence="1 2">5.4.2.12</ecNumber>
    </recommendedName>
</protein>
<feature type="chain" id="PRO_0000212193" description="2,3-bisphosphoglycerate-independent phosphoglycerate mutase">
    <location>
        <begin position="1"/>
        <end position="510"/>
    </location>
</feature>
<feature type="active site" description="Phosphoserine intermediate" evidence="1">
    <location>
        <position position="64"/>
    </location>
</feature>
<feature type="binding site" evidence="1">
    <location>
        <position position="14"/>
    </location>
    <ligand>
        <name>Mn(2+)</name>
        <dbReference type="ChEBI" id="CHEBI:29035"/>
        <label>2</label>
    </ligand>
</feature>
<feature type="binding site" evidence="1">
    <location>
        <position position="64"/>
    </location>
    <ligand>
        <name>Mn(2+)</name>
        <dbReference type="ChEBI" id="CHEBI:29035"/>
        <label>2</label>
    </ligand>
</feature>
<feature type="binding site" evidence="1">
    <location>
        <position position="125"/>
    </location>
    <ligand>
        <name>substrate</name>
    </ligand>
</feature>
<feature type="binding site" evidence="1">
    <location>
        <begin position="155"/>
        <end position="156"/>
    </location>
    <ligand>
        <name>substrate</name>
    </ligand>
</feature>
<feature type="binding site" evidence="1">
    <location>
        <position position="187"/>
    </location>
    <ligand>
        <name>substrate</name>
    </ligand>
</feature>
<feature type="binding site" evidence="1">
    <location>
        <position position="193"/>
    </location>
    <ligand>
        <name>substrate</name>
    </ligand>
</feature>
<feature type="binding site" evidence="1">
    <location>
        <begin position="259"/>
        <end position="262"/>
    </location>
    <ligand>
        <name>substrate</name>
    </ligand>
</feature>
<feature type="binding site" evidence="1">
    <location>
        <position position="332"/>
    </location>
    <ligand>
        <name>substrate</name>
    </ligand>
</feature>
<feature type="binding site" evidence="1">
    <location>
        <position position="399"/>
    </location>
    <ligand>
        <name>Mn(2+)</name>
        <dbReference type="ChEBI" id="CHEBI:29035"/>
        <label>1</label>
    </ligand>
</feature>
<feature type="binding site" evidence="1">
    <location>
        <position position="403"/>
    </location>
    <ligand>
        <name>Mn(2+)</name>
        <dbReference type="ChEBI" id="CHEBI:29035"/>
        <label>1</label>
    </ligand>
</feature>
<feature type="binding site" evidence="1">
    <location>
        <position position="440"/>
    </location>
    <ligand>
        <name>Mn(2+)</name>
        <dbReference type="ChEBI" id="CHEBI:29035"/>
        <label>2</label>
    </ligand>
</feature>
<feature type="binding site" evidence="1">
    <location>
        <position position="441"/>
    </location>
    <ligand>
        <name>Mn(2+)</name>
        <dbReference type="ChEBI" id="CHEBI:29035"/>
        <label>2</label>
    </ligand>
</feature>
<feature type="binding site" evidence="1">
    <location>
        <position position="459"/>
    </location>
    <ligand>
        <name>Mn(2+)</name>
        <dbReference type="ChEBI" id="CHEBI:29035"/>
        <label>1</label>
    </ligand>
</feature>
<evidence type="ECO:0000255" key="1">
    <source>
        <dbReference type="HAMAP-Rule" id="MF_01038"/>
    </source>
</evidence>
<evidence type="ECO:0000269" key="2">
    <source>
    </source>
</evidence>
<evidence type="ECO:0000303" key="3">
    <source>
    </source>
</evidence>
<evidence type="ECO:0000312" key="4">
    <source>
        <dbReference type="EMBL" id="AAO58753.1"/>
    </source>
</evidence>
<reference key="1">
    <citation type="journal article" date="1995" name="J. Bacteriol.">
        <title>Isolation and sequence analysis of the Pseudomonas syringae pv. tomato gene encoding a 2,3-diphosphoglycerate-independent phosphoglyceromutase.</title>
        <authorList>
            <person name="Morris V.L."/>
            <person name="Jackson D.P."/>
            <person name="Grattan M."/>
            <person name="Ainsworth T."/>
            <person name="Cuppels D.A."/>
        </authorList>
    </citation>
    <scope>NUCLEOTIDE SEQUENCE [GENOMIC DNA]</scope>
    <scope>FUNCTION</scope>
    <scope>CATALYTIC ACTIVITY</scope>
    <scope>DISRUPTION PHENOTYPE</scope>
    <source>
        <strain>ATCC BAA-871 / DC3000</strain>
    </source>
</reference>
<reference key="2">
    <citation type="journal article" date="2003" name="Proc. Natl. Acad. Sci. U.S.A.">
        <title>The complete genome sequence of the Arabidopsis and tomato pathogen Pseudomonas syringae pv. tomato DC3000.</title>
        <authorList>
            <person name="Buell C.R."/>
            <person name="Joardar V."/>
            <person name="Lindeberg M."/>
            <person name="Selengut J."/>
            <person name="Paulsen I.T."/>
            <person name="Gwinn M.L."/>
            <person name="Dodson R.J."/>
            <person name="DeBoy R.T."/>
            <person name="Durkin A.S."/>
            <person name="Kolonay J.F."/>
            <person name="Madupu R."/>
            <person name="Daugherty S.C."/>
            <person name="Brinkac L.M."/>
            <person name="Beanan M.J."/>
            <person name="Haft D.H."/>
            <person name="Nelson W.C."/>
            <person name="Davidsen T.M."/>
            <person name="Zafar N."/>
            <person name="Zhou L."/>
            <person name="Liu J."/>
            <person name="Yuan Q."/>
            <person name="Khouri H.M."/>
            <person name="Fedorova N.B."/>
            <person name="Tran B."/>
            <person name="Russell D."/>
            <person name="Berry K.J."/>
            <person name="Utterback T.R."/>
            <person name="Van Aken S.E."/>
            <person name="Feldblyum T.V."/>
            <person name="D'Ascenzo M."/>
            <person name="Deng W.-L."/>
            <person name="Ramos A.R."/>
            <person name="Alfano J.R."/>
            <person name="Cartinhour S."/>
            <person name="Chatterjee A.K."/>
            <person name="Delaney T.P."/>
            <person name="Lazarowitz S.G."/>
            <person name="Martin G.B."/>
            <person name="Schneider D.J."/>
            <person name="Tang X."/>
            <person name="Bender C.L."/>
            <person name="White O."/>
            <person name="Fraser C.M."/>
            <person name="Collmer A."/>
        </authorList>
    </citation>
    <scope>NUCLEOTIDE SEQUENCE [LARGE SCALE GENOMIC DNA]</scope>
    <source>
        <strain>ATCC BAA-871 / DC3000</strain>
    </source>
</reference>
<comment type="function">
    <text evidence="2">Catalyzes the interconversion of 2-phosphoglycerate and 3-phosphoglycerate. Essential for the growth and pathogenicity on the host plant.</text>
</comment>
<comment type="catalytic activity">
    <reaction evidence="1 2">
        <text>(2R)-2-phosphoglycerate = (2R)-3-phosphoglycerate</text>
        <dbReference type="Rhea" id="RHEA:15901"/>
        <dbReference type="ChEBI" id="CHEBI:58272"/>
        <dbReference type="ChEBI" id="CHEBI:58289"/>
        <dbReference type="EC" id="5.4.2.12"/>
    </reaction>
</comment>
<comment type="cofactor">
    <cofactor evidence="1">
        <name>Mn(2+)</name>
        <dbReference type="ChEBI" id="CHEBI:29035"/>
    </cofactor>
    <text evidence="1">Binds 2 manganese ions per subunit.</text>
</comment>
<comment type="pathway">
    <text evidence="1">Carbohydrate degradation; glycolysis; pyruvate from D-glyceraldehyde 3-phosphate: step 3/5.</text>
</comment>
<comment type="subunit">
    <text evidence="1">Monomer.</text>
</comment>
<comment type="disruption phenotype">
    <text evidence="2">Cannot use, as a sole carbon and/or energy source, a wide variety of hexoses and intermediates of hexose catabolism.</text>
</comment>
<comment type="similarity">
    <text evidence="1">Belongs to the BPG-independent phosphoglycerate mutase family.</text>
</comment>
<sequence>MTATPKPLVLIILDGFGHSESHEGNAILAAKMPVMDRLYKTMPNGLISGSGMDVGLPDGQMGNSEVGHMNLGAGRVVYQDFTRVTKAIRDGEFFENPTICAAVDKAVSAGKAVHIMGLLSDGGVHSHQDHLVAMAELAVRRGADKIYLHAFLDGRDTPPRSAKKSLELMDETFARLGKGRIATIIGRYFAMDRDNRWDRVSTAYNLIVDSSAEFHAATGVAGLEAAYARDENDEFVKATRIGEPANVEDGDAVVFMNFRADRARELTRVFVEDDFKDFERARQPKVNYVMLTQYAASIPAPSAFAAGSLKNVLGEYLADNGKTQLRIAETEKYAHVTFFFSGGREEPFPGEERILIPSPKVATYDLQPEMSAPEVTDKIVDAIEHQRYDVIIVNYANGDMVGHSGIMEAAIKAVEYLDVCVGRITDALEKVGGEALITADHGNVEQMTDDATGQAHTAHTSEPVPFVYVGKRQLKVREGGVLADVAPTMLQLLGMEKPQEMTGHSILVEE</sequence>
<proteinExistence type="evidence at protein level"/>
<gene>
    <name evidence="1" type="primary">gpmI</name>
    <name evidence="4" type="synonym">gpmA</name>
    <name evidence="3" type="synonym">pgm</name>
    <name type="ordered locus">PSPTO_5327</name>
</gene>
<name>GPMI_PSESM</name>
<keyword id="KW-0324">Glycolysis</keyword>
<keyword id="KW-0413">Isomerase</keyword>
<keyword id="KW-0464">Manganese</keyword>
<keyword id="KW-0479">Metal-binding</keyword>
<keyword id="KW-1185">Reference proteome</keyword>
<organism>
    <name type="scientific">Pseudomonas syringae pv. tomato (strain ATCC BAA-871 / DC3000)</name>
    <dbReference type="NCBI Taxonomy" id="223283"/>
    <lineage>
        <taxon>Bacteria</taxon>
        <taxon>Pseudomonadati</taxon>
        <taxon>Pseudomonadota</taxon>
        <taxon>Gammaproteobacteria</taxon>
        <taxon>Pseudomonadales</taxon>
        <taxon>Pseudomonadaceae</taxon>
        <taxon>Pseudomonas</taxon>
    </lineage>
</organism>
<accession>P52832</accession>